<sequence length="634" mass="69700">MDNAVDGLDKASIANSDGPTAGSQTPPFKRKGKLSTIGKIFKPWKWRKKKTSDKFRETSAVLERKISTRQSREELIRRGVLKELPDQDGDVTVNFENSNGHMIPIGEESTREENVVKSEEGNGSVSEKTPPLEEQAEDKKENTENHSETPAAPALPPSAPPKPRPKPKPKKSPVPPKGATAGASHKGDEVPPIKKNTKAPGKQAPVPPPKPASRNTTREAAGSSHSKKTTGSKASASPSTSSTSSRPKASKETVSSKAGTVGTTKGKRKTDKQPITSHLSSDTTTSGTSDLKGEPAETRVESFKLEQTVPGAEEQNTGKFKSMVPPPPVAPAPSPLAPPLPLEDQCITASDTPVVLVSVGADLPVSALDPSQLLWAEEPTNRTTLYSGTGLSVNRENAKCFTTKEELGKTVPQLLTPGLMGESSESFSASEDEGHREYQANDSDSDGPILYTDDEDEDEDEDGSGESALASKIRRRDTLAIKLGNRPSKKELEDKNILQRTSEEERQEIRQQIGTKLVRRLSQRPTTEELEQRNILKQKNEEEEQEAKMELKRRLSRKLSLRPTVAELQARRILRFNEYVEVTDSPDYDRRADKPWARLTPADKAAIRKELNEFKSTEMEVHEESRQFTRFHRP</sequence>
<keyword id="KW-0009">Actin-binding</keyword>
<keyword id="KW-0025">Alternative splicing</keyword>
<keyword id="KW-0449">Lipoprotein</keyword>
<keyword id="KW-0472">Membrane</keyword>
<keyword id="KW-0519">Myristate</keyword>
<keyword id="KW-0597">Phosphoprotein</keyword>
<keyword id="KW-0650">Protein phosphatase inhibitor</keyword>
<keyword id="KW-1267">Proteomics identification</keyword>
<keyword id="KW-1185">Reference proteome</keyword>
<keyword id="KW-0677">Repeat</keyword>
<name>PHAR2_HUMAN</name>
<evidence type="ECO:0000250" key="1"/>
<evidence type="ECO:0000250" key="2">
    <source>
        <dbReference type="UniProtKB" id="P62025"/>
    </source>
</evidence>
<evidence type="ECO:0000256" key="3">
    <source>
        <dbReference type="SAM" id="MobiDB-lite"/>
    </source>
</evidence>
<evidence type="ECO:0000269" key="4">
    <source>
    </source>
</evidence>
<evidence type="ECO:0000269" key="5">
    <source>
    </source>
</evidence>
<evidence type="ECO:0000269" key="6">
    <source>
    </source>
</evidence>
<evidence type="ECO:0000303" key="7">
    <source>
    </source>
</evidence>
<evidence type="ECO:0000303" key="8">
    <source>
    </source>
</evidence>
<evidence type="ECO:0000305" key="9"/>
<evidence type="ECO:0007744" key="10">
    <source>
    </source>
</evidence>
<evidence type="ECO:0007744" key="11">
    <source>
    </source>
</evidence>
<evidence type="ECO:0007744" key="12">
    <source>
    </source>
</evidence>
<proteinExistence type="evidence at protein level"/>
<organism>
    <name type="scientific">Homo sapiens</name>
    <name type="common">Human</name>
    <dbReference type="NCBI Taxonomy" id="9606"/>
    <lineage>
        <taxon>Eukaryota</taxon>
        <taxon>Metazoa</taxon>
        <taxon>Chordata</taxon>
        <taxon>Craniata</taxon>
        <taxon>Vertebrata</taxon>
        <taxon>Euteleostomi</taxon>
        <taxon>Mammalia</taxon>
        <taxon>Eutheria</taxon>
        <taxon>Euarchontoglires</taxon>
        <taxon>Primates</taxon>
        <taxon>Haplorrhini</taxon>
        <taxon>Catarrhini</taxon>
        <taxon>Hominidae</taxon>
        <taxon>Homo</taxon>
    </lineage>
</organism>
<protein>
    <recommendedName>
        <fullName>Phosphatase and actin regulator 2</fullName>
    </recommendedName>
</protein>
<feature type="chain" id="PRO_0000126636" description="Phosphatase and actin regulator 2">
    <location>
        <begin position="1"/>
        <end position="634"/>
    </location>
</feature>
<feature type="repeat" description="RPEL 1">
    <location>
        <begin position="60"/>
        <end position="85"/>
    </location>
</feature>
<feature type="repeat" description="RPEL 2">
    <location>
        <begin position="477"/>
        <end position="502"/>
    </location>
</feature>
<feature type="repeat" description="RPEL 3">
    <location>
        <begin position="515"/>
        <end position="540"/>
    </location>
</feature>
<feature type="repeat" description="RPEL 4">
    <location>
        <begin position="553"/>
        <end position="578"/>
    </location>
</feature>
<feature type="region of interest" description="Disordered" evidence="3">
    <location>
        <begin position="1"/>
        <end position="32"/>
    </location>
</feature>
<feature type="region of interest" description="Disordered" evidence="3">
    <location>
        <begin position="84"/>
        <end position="344"/>
    </location>
</feature>
<feature type="region of interest" description="Disordered" evidence="3">
    <location>
        <begin position="412"/>
        <end position="471"/>
    </location>
</feature>
<feature type="region of interest" description="Disordered" evidence="3">
    <location>
        <begin position="485"/>
        <end position="508"/>
    </location>
</feature>
<feature type="compositionally biased region" description="Polar residues" evidence="3">
    <location>
        <begin position="13"/>
        <end position="26"/>
    </location>
</feature>
<feature type="compositionally biased region" description="Basic and acidic residues" evidence="3">
    <location>
        <begin position="108"/>
        <end position="120"/>
    </location>
</feature>
<feature type="compositionally biased region" description="Basic and acidic residues" evidence="3">
    <location>
        <begin position="137"/>
        <end position="147"/>
    </location>
</feature>
<feature type="compositionally biased region" description="Pro residues" evidence="3">
    <location>
        <begin position="153"/>
        <end position="162"/>
    </location>
</feature>
<feature type="compositionally biased region" description="Low complexity" evidence="3">
    <location>
        <begin position="231"/>
        <end position="247"/>
    </location>
</feature>
<feature type="compositionally biased region" description="Low complexity" evidence="3">
    <location>
        <begin position="276"/>
        <end position="290"/>
    </location>
</feature>
<feature type="compositionally biased region" description="Basic and acidic residues" evidence="3">
    <location>
        <begin position="291"/>
        <end position="304"/>
    </location>
</feature>
<feature type="compositionally biased region" description="Pro residues" evidence="3">
    <location>
        <begin position="324"/>
        <end position="341"/>
    </location>
</feature>
<feature type="compositionally biased region" description="Acidic residues" evidence="3">
    <location>
        <begin position="452"/>
        <end position="464"/>
    </location>
</feature>
<feature type="compositionally biased region" description="Basic and acidic residues" evidence="3">
    <location>
        <begin position="488"/>
        <end position="508"/>
    </location>
</feature>
<feature type="modified residue" description="Phosphoserine" evidence="11">
    <location>
        <position position="16"/>
    </location>
</feature>
<feature type="modified residue" description="Phosphothreonine" evidence="11 12">
    <location>
        <position position="25"/>
    </location>
</feature>
<feature type="modified residue" description="Phosphoserine" evidence="2">
    <location>
        <position position="423"/>
    </location>
</feature>
<feature type="modified residue" description="Phosphoserine" evidence="10 11">
    <location>
        <position position="522"/>
    </location>
</feature>
<feature type="modified residue" description="Phosphoserine" evidence="11">
    <location>
        <position position="560"/>
    </location>
</feature>
<feature type="splice variant" id="VSP_012272" description="In isoform 2 and isoform 4." evidence="7 8">
    <original>MDNA</original>
    <variation>MGQTSVSTLSPQPGS</variation>
    <location>
        <begin position="1"/>
        <end position="4"/>
    </location>
</feature>
<feature type="splice variant" id="VSP_012273" description="In isoform 2 and isoform 5." evidence="7 8">
    <location>
        <begin position="141"/>
        <end position="220"/>
    </location>
</feature>
<feature type="sequence variant" id="VAR_045628" description="In dbSNP:rs2073214." evidence="4 6">
    <original>P</original>
    <variation>S</variation>
    <location>
        <position position="165"/>
    </location>
</feature>
<feature type="sequence variant" id="VAR_053646" description="In dbSNP:rs2295201.">
    <original>I</original>
    <variation>V</variation>
    <location>
        <position position="449"/>
    </location>
</feature>
<feature type="sequence conflict" description="In Ref. 5; AAI50631." evidence="9" ref="5">
    <original>T</original>
    <variation>I</variation>
    <location>
        <position position="197"/>
    </location>
</feature>
<feature type="sequence conflict" description="In Ref. 2; BAG60138." evidence="9" ref="2">
    <original>R</original>
    <variation>K</variation>
    <location>
        <position position="436"/>
    </location>
</feature>
<feature type="sequence conflict" description="In Ref. 2; BAG60138." evidence="9" ref="2">
    <original>K</original>
    <variation>R</variation>
    <location>
        <position position="558"/>
    </location>
</feature>
<feature type="sequence conflict" description="In Ref. 2; BAG60138." evidence="9" ref="2">
    <original>E</original>
    <variation>G</variation>
    <location>
        <position position="610"/>
    </location>
</feature>
<feature type="initiator methionine" description="Removed" evidence="5">
    <location sequence="O75167-2">
        <position position="1"/>
    </location>
</feature>
<feature type="lipid moiety-binding region" description="N-myristoyl glycine" evidence="5">
    <location sequence="O75167-2">
        <position position="2"/>
    </location>
</feature>
<feature type="initiator methionine" description="Removed" evidence="5">
    <location sequence="O75167-4">
        <position position="1"/>
    </location>
</feature>
<feature type="lipid moiety-binding region" description="N-myristoyl glycine" evidence="5">
    <location sequence="O75167-4">
        <position position="2"/>
    </location>
</feature>
<dbReference type="EMBL" id="AB014580">
    <property type="protein sequence ID" value="BAA31655.2"/>
    <property type="status" value="ALT_INIT"/>
    <property type="molecule type" value="mRNA"/>
</dbReference>
<dbReference type="EMBL" id="AK297799">
    <property type="protein sequence ID" value="BAG60138.1"/>
    <property type="molecule type" value="mRNA"/>
</dbReference>
<dbReference type="EMBL" id="AK298263">
    <property type="protein sequence ID" value="BAG60527.1"/>
    <property type="status" value="ALT_SEQ"/>
    <property type="molecule type" value="mRNA"/>
</dbReference>
<dbReference type="EMBL" id="AK300221">
    <property type="protein sequence ID" value="BAG61989.1"/>
    <property type="molecule type" value="mRNA"/>
</dbReference>
<dbReference type="EMBL" id="CR749345">
    <property type="protein sequence ID" value="CAH18198.1"/>
    <property type="molecule type" value="mRNA"/>
</dbReference>
<dbReference type="EMBL" id="AL049844">
    <property type="status" value="NOT_ANNOTATED_CDS"/>
    <property type="molecule type" value="Genomic_DNA"/>
</dbReference>
<dbReference type="EMBL" id="AL078593">
    <property type="status" value="NOT_ANNOTATED_CDS"/>
    <property type="molecule type" value="Genomic_DNA"/>
</dbReference>
<dbReference type="EMBL" id="AL357117">
    <property type="status" value="NOT_ANNOTATED_CDS"/>
    <property type="molecule type" value="Genomic_DNA"/>
</dbReference>
<dbReference type="EMBL" id="BC150630">
    <property type="protein sequence ID" value="AAI50631.1"/>
    <property type="molecule type" value="mRNA"/>
</dbReference>
<dbReference type="EMBL" id="BC152416">
    <property type="protein sequence ID" value="AAI52417.1"/>
    <property type="molecule type" value="mRNA"/>
</dbReference>
<dbReference type="CCDS" id="CCDS43512.1">
    <molecule id="O75167-5"/>
</dbReference>
<dbReference type="CCDS" id="CCDS47492.1">
    <molecule id="O75167-1"/>
</dbReference>
<dbReference type="CCDS" id="CCDS47493.1">
    <molecule id="O75167-4"/>
</dbReference>
<dbReference type="CCDS" id="CCDS47494.1">
    <molecule id="O75167-2"/>
</dbReference>
<dbReference type="PIR" id="T00359">
    <property type="entry name" value="T00359"/>
</dbReference>
<dbReference type="RefSeq" id="NP_001093634.1">
    <molecule id="O75167-4"/>
    <property type="nucleotide sequence ID" value="NM_001100164.2"/>
</dbReference>
<dbReference type="RefSeq" id="NP_001093635.1">
    <molecule id="O75167-2"/>
    <property type="nucleotide sequence ID" value="NM_001100165.2"/>
</dbReference>
<dbReference type="RefSeq" id="NP_001093636.1">
    <molecule id="O75167-5"/>
    <property type="nucleotide sequence ID" value="NM_001100166.2"/>
</dbReference>
<dbReference type="RefSeq" id="NP_055536.2">
    <molecule id="O75167-1"/>
    <property type="nucleotide sequence ID" value="NM_014721.3"/>
</dbReference>
<dbReference type="SMR" id="O75167"/>
<dbReference type="BioGRID" id="115097">
    <property type="interactions" value="29"/>
</dbReference>
<dbReference type="FunCoup" id="O75167">
    <property type="interactions" value="323"/>
</dbReference>
<dbReference type="IntAct" id="O75167">
    <property type="interactions" value="22"/>
</dbReference>
<dbReference type="MINT" id="O75167"/>
<dbReference type="STRING" id="9606.ENSP00000417038"/>
<dbReference type="GlyGen" id="O75167">
    <property type="glycosylation" value="2 sites, 1 O-linked glycan (1 site)"/>
</dbReference>
<dbReference type="iPTMnet" id="O75167"/>
<dbReference type="PhosphoSitePlus" id="O75167"/>
<dbReference type="BioMuta" id="PHACTR2"/>
<dbReference type="CPTAC" id="CPTAC-989"/>
<dbReference type="jPOST" id="O75167"/>
<dbReference type="MassIVE" id="O75167"/>
<dbReference type="PaxDb" id="9606-ENSP00000417038"/>
<dbReference type="PeptideAtlas" id="O75167"/>
<dbReference type="ProteomicsDB" id="49831">
    <molecule id="O75167-1"/>
</dbReference>
<dbReference type="ProteomicsDB" id="49832">
    <molecule id="O75167-2"/>
</dbReference>
<dbReference type="ProteomicsDB" id="49833">
    <molecule id="O75167-4"/>
</dbReference>
<dbReference type="ProteomicsDB" id="49834">
    <molecule id="O75167-5"/>
</dbReference>
<dbReference type="Pumba" id="O75167"/>
<dbReference type="Antibodypedia" id="33158">
    <property type="antibodies" value="91 antibodies from 16 providers"/>
</dbReference>
<dbReference type="DNASU" id="9749"/>
<dbReference type="Ensembl" id="ENST00000305766.10">
    <molecule id="O75167-5"/>
    <property type="protein sequence ID" value="ENSP00000305530.6"/>
    <property type="gene ID" value="ENSG00000112419.15"/>
</dbReference>
<dbReference type="Ensembl" id="ENST00000367582.7">
    <molecule id="O75167-2"/>
    <property type="protein sequence ID" value="ENSP00000356554.3"/>
    <property type="gene ID" value="ENSG00000112419.15"/>
</dbReference>
<dbReference type="Ensembl" id="ENST00000427704.6">
    <molecule id="O75167-1"/>
    <property type="protein sequence ID" value="ENSP00000391763.2"/>
    <property type="gene ID" value="ENSG00000112419.15"/>
</dbReference>
<dbReference type="Ensembl" id="ENST00000440869.7">
    <molecule id="O75167-4"/>
    <property type="protein sequence ID" value="ENSP00000417038.2"/>
    <property type="gene ID" value="ENSG00000112419.15"/>
</dbReference>
<dbReference type="GeneID" id="9749"/>
<dbReference type="KEGG" id="hsa:9749"/>
<dbReference type="MANE-Select" id="ENST00000440869.7">
    <molecule id="O75167-4"/>
    <property type="protein sequence ID" value="ENSP00000417038.2"/>
    <property type="RefSeq nucleotide sequence ID" value="NM_001100164.2"/>
    <property type="RefSeq protein sequence ID" value="NP_001093634.1"/>
</dbReference>
<dbReference type="UCSC" id="uc003qjq.4">
    <molecule id="O75167-1"/>
    <property type="organism name" value="human"/>
</dbReference>
<dbReference type="AGR" id="HGNC:20956"/>
<dbReference type="CTD" id="9749"/>
<dbReference type="DisGeNET" id="9749"/>
<dbReference type="GeneCards" id="PHACTR2"/>
<dbReference type="HGNC" id="HGNC:20956">
    <property type="gene designation" value="PHACTR2"/>
</dbReference>
<dbReference type="HPA" id="ENSG00000112419">
    <property type="expression patterns" value="Tissue enhanced (placenta)"/>
</dbReference>
<dbReference type="MIM" id="608724">
    <property type="type" value="gene"/>
</dbReference>
<dbReference type="neXtProt" id="NX_O75167"/>
<dbReference type="OpenTargets" id="ENSG00000112419"/>
<dbReference type="PharmGKB" id="PA134944445"/>
<dbReference type="VEuPathDB" id="HostDB:ENSG00000112419"/>
<dbReference type="eggNOG" id="KOG4339">
    <property type="taxonomic scope" value="Eukaryota"/>
</dbReference>
<dbReference type="GeneTree" id="ENSGT00940000157628"/>
<dbReference type="HOGENOM" id="CLU_015753_2_0_1"/>
<dbReference type="InParanoid" id="O75167"/>
<dbReference type="OMA" id="GPSHKGD"/>
<dbReference type="OrthoDB" id="5563016at2759"/>
<dbReference type="PAN-GO" id="O75167">
    <property type="GO annotations" value="2 GO annotations based on evolutionary models"/>
</dbReference>
<dbReference type="PhylomeDB" id="O75167"/>
<dbReference type="TreeFam" id="TF316316"/>
<dbReference type="PathwayCommons" id="O75167"/>
<dbReference type="Reactome" id="R-HSA-114608">
    <property type="pathway name" value="Platelet degranulation"/>
</dbReference>
<dbReference type="SignaLink" id="O75167"/>
<dbReference type="BioGRID-ORCS" id="9749">
    <property type="hits" value="11 hits in 1156 CRISPR screens"/>
</dbReference>
<dbReference type="ChiTaRS" id="PHACTR2">
    <property type="organism name" value="human"/>
</dbReference>
<dbReference type="GenomeRNAi" id="9749"/>
<dbReference type="Pharos" id="O75167">
    <property type="development level" value="Tbio"/>
</dbReference>
<dbReference type="PRO" id="PR:O75167"/>
<dbReference type="Proteomes" id="UP000005640">
    <property type="component" value="Chromosome 6"/>
</dbReference>
<dbReference type="RNAct" id="O75167">
    <property type="molecule type" value="protein"/>
</dbReference>
<dbReference type="Bgee" id="ENSG00000112419">
    <property type="expression patterns" value="Expressed in placenta and 207 other cell types or tissues"/>
</dbReference>
<dbReference type="ExpressionAtlas" id="O75167">
    <property type="expression patterns" value="baseline and differential"/>
</dbReference>
<dbReference type="GO" id="GO:0005886">
    <property type="term" value="C:plasma membrane"/>
    <property type="evidence" value="ECO:0000304"/>
    <property type="project" value="Reactome"/>
</dbReference>
<dbReference type="GO" id="GO:0031092">
    <property type="term" value="C:platelet alpha granule membrane"/>
    <property type="evidence" value="ECO:0000304"/>
    <property type="project" value="Reactome"/>
</dbReference>
<dbReference type="GO" id="GO:0003779">
    <property type="term" value="F:actin binding"/>
    <property type="evidence" value="ECO:0000318"/>
    <property type="project" value="GO_Central"/>
</dbReference>
<dbReference type="GO" id="GO:0004864">
    <property type="term" value="F:protein phosphatase inhibitor activity"/>
    <property type="evidence" value="ECO:0007669"/>
    <property type="project" value="UniProtKB-KW"/>
</dbReference>
<dbReference type="GO" id="GO:0030036">
    <property type="term" value="P:actin cytoskeleton organization"/>
    <property type="evidence" value="ECO:0000318"/>
    <property type="project" value="GO_Central"/>
</dbReference>
<dbReference type="Gene3D" id="6.10.140.1750">
    <property type="match status" value="1"/>
</dbReference>
<dbReference type="Gene3D" id="6.10.140.2130">
    <property type="match status" value="1"/>
</dbReference>
<dbReference type="InterPro" id="IPR004018">
    <property type="entry name" value="RPEL_repeat"/>
</dbReference>
<dbReference type="PANTHER" id="PTHR12751:SF5">
    <property type="entry name" value="PHOSPHATASE AND ACTIN REGULATOR 2"/>
    <property type="match status" value="1"/>
</dbReference>
<dbReference type="PANTHER" id="PTHR12751">
    <property type="entry name" value="PHOSPHATASE AND ACTIN REGULATOR PHACTR"/>
    <property type="match status" value="1"/>
</dbReference>
<dbReference type="Pfam" id="PF02755">
    <property type="entry name" value="RPEL"/>
    <property type="match status" value="2"/>
</dbReference>
<dbReference type="SMART" id="SM00707">
    <property type="entry name" value="RPEL"/>
    <property type="match status" value="4"/>
</dbReference>
<dbReference type="PROSITE" id="PS51073">
    <property type="entry name" value="RPEL"/>
    <property type="match status" value="4"/>
</dbReference>
<accession>O75167</accession>
<accession>A6NKP5</accession>
<accession>A7MCZ5</accession>
<accession>A8MZC0</accession>
<accession>B2RWP7</accession>
<accession>B4DN76</accession>
<accession>B4DPB5</accession>
<accession>B4DTH7</accession>
<accession>Q5TFA0</accession>
<accession>Q68DM2</accession>
<gene>
    <name type="primary">PHACTR2</name>
    <name type="synonym">C6orf56</name>
    <name type="synonym">KIAA0680</name>
</gene>
<reference key="1">
    <citation type="journal article" date="1998" name="DNA Res.">
        <title>Prediction of the coding sequences of unidentified human genes. X. The complete sequences of 100 new cDNA clones from brain which can code for large proteins in vitro.</title>
        <authorList>
            <person name="Ishikawa K."/>
            <person name="Nagase T."/>
            <person name="Suyama M."/>
            <person name="Miyajima N."/>
            <person name="Tanaka A."/>
            <person name="Kotani H."/>
            <person name="Nomura N."/>
            <person name="Ohara O."/>
        </authorList>
    </citation>
    <scope>NUCLEOTIDE SEQUENCE [LARGE SCALE MRNA] (ISOFORM 1)</scope>
    <scope>VARIANT SER-165</scope>
    <source>
        <tissue>Brain</tissue>
    </source>
</reference>
<reference key="2">
    <citation type="journal article" date="2004" name="Nat. Genet.">
        <title>Complete sequencing and characterization of 21,243 full-length human cDNAs.</title>
        <authorList>
            <person name="Ota T."/>
            <person name="Suzuki Y."/>
            <person name="Nishikawa T."/>
            <person name="Otsuki T."/>
            <person name="Sugiyama T."/>
            <person name="Irie R."/>
            <person name="Wakamatsu A."/>
            <person name="Hayashi K."/>
            <person name="Sato H."/>
            <person name="Nagai K."/>
            <person name="Kimura K."/>
            <person name="Makita H."/>
            <person name="Sekine M."/>
            <person name="Obayashi M."/>
            <person name="Nishi T."/>
            <person name="Shibahara T."/>
            <person name="Tanaka T."/>
            <person name="Ishii S."/>
            <person name="Yamamoto J."/>
            <person name="Saito K."/>
            <person name="Kawai Y."/>
            <person name="Isono Y."/>
            <person name="Nakamura Y."/>
            <person name="Nagahari K."/>
            <person name="Murakami K."/>
            <person name="Yasuda T."/>
            <person name="Iwayanagi T."/>
            <person name="Wagatsuma M."/>
            <person name="Shiratori A."/>
            <person name="Sudo H."/>
            <person name="Hosoiri T."/>
            <person name="Kaku Y."/>
            <person name="Kodaira H."/>
            <person name="Kondo H."/>
            <person name="Sugawara M."/>
            <person name="Takahashi M."/>
            <person name="Kanda K."/>
            <person name="Yokoi T."/>
            <person name="Furuya T."/>
            <person name="Kikkawa E."/>
            <person name="Omura Y."/>
            <person name="Abe K."/>
            <person name="Kamihara K."/>
            <person name="Katsuta N."/>
            <person name="Sato K."/>
            <person name="Tanikawa M."/>
            <person name="Yamazaki M."/>
            <person name="Ninomiya K."/>
            <person name="Ishibashi T."/>
            <person name="Yamashita H."/>
            <person name="Murakawa K."/>
            <person name="Fujimori K."/>
            <person name="Tanai H."/>
            <person name="Kimata M."/>
            <person name="Watanabe M."/>
            <person name="Hiraoka S."/>
            <person name="Chiba Y."/>
            <person name="Ishida S."/>
            <person name="Ono Y."/>
            <person name="Takiguchi S."/>
            <person name="Watanabe S."/>
            <person name="Yosida M."/>
            <person name="Hotuta T."/>
            <person name="Kusano J."/>
            <person name="Kanehori K."/>
            <person name="Takahashi-Fujii A."/>
            <person name="Hara H."/>
            <person name="Tanase T.-O."/>
            <person name="Nomura Y."/>
            <person name="Togiya S."/>
            <person name="Komai F."/>
            <person name="Hara R."/>
            <person name="Takeuchi K."/>
            <person name="Arita M."/>
            <person name="Imose N."/>
            <person name="Musashino K."/>
            <person name="Yuuki H."/>
            <person name="Oshima A."/>
            <person name="Sasaki N."/>
            <person name="Aotsuka S."/>
            <person name="Yoshikawa Y."/>
            <person name="Matsunawa H."/>
            <person name="Ichihara T."/>
            <person name="Shiohata N."/>
            <person name="Sano S."/>
            <person name="Moriya S."/>
            <person name="Momiyama H."/>
            <person name="Satoh N."/>
            <person name="Takami S."/>
            <person name="Terashima Y."/>
            <person name="Suzuki O."/>
            <person name="Nakagawa S."/>
            <person name="Senoh A."/>
            <person name="Mizoguchi H."/>
            <person name="Goto Y."/>
            <person name="Shimizu F."/>
            <person name="Wakebe H."/>
            <person name="Hishigaki H."/>
            <person name="Watanabe T."/>
            <person name="Sugiyama A."/>
            <person name="Takemoto M."/>
            <person name="Kawakami B."/>
            <person name="Yamazaki M."/>
            <person name="Watanabe K."/>
            <person name="Kumagai A."/>
            <person name="Itakura S."/>
            <person name="Fukuzumi Y."/>
            <person name="Fujimori Y."/>
            <person name="Komiyama M."/>
            <person name="Tashiro H."/>
            <person name="Tanigami A."/>
            <person name="Fujiwara T."/>
            <person name="Ono T."/>
            <person name="Yamada K."/>
            <person name="Fujii Y."/>
            <person name="Ozaki K."/>
            <person name="Hirao M."/>
            <person name="Ohmori Y."/>
            <person name="Kawabata A."/>
            <person name="Hikiji T."/>
            <person name="Kobatake N."/>
            <person name="Inagaki H."/>
            <person name="Ikema Y."/>
            <person name="Okamoto S."/>
            <person name="Okitani R."/>
            <person name="Kawakami T."/>
            <person name="Noguchi S."/>
            <person name="Itoh T."/>
            <person name="Shigeta K."/>
            <person name="Senba T."/>
            <person name="Matsumura K."/>
            <person name="Nakajima Y."/>
            <person name="Mizuno T."/>
            <person name="Morinaga M."/>
            <person name="Sasaki M."/>
            <person name="Togashi T."/>
            <person name="Oyama M."/>
            <person name="Hata H."/>
            <person name="Watanabe M."/>
            <person name="Komatsu T."/>
            <person name="Mizushima-Sugano J."/>
            <person name="Satoh T."/>
            <person name="Shirai Y."/>
            <person name="Takahashi Y."/>
            <person name="Nakagawa K."/>
            <person name="Okumura K."/>
            <person name="Nagase T."/>
            <person name="Nomura N."/>
            <person name="Kikuchi H."/>
            <person name="Masuho Y."/>
            <person name="Yamashita R."/>
            <person name="Nakai K."/>
            <person name="Yada T."/>
            <person name="Nakamura Y."/>
            <person name="Ohara O."/>
            <person name="Isogai T."/>
            <person name="Sugano S."/>
        </authorList>
    </citation>
    <scope>NUCLEOTIDE SEQUENCE [LARGE SCALE MRNA] (ISOFORMS 4 AND 5)</scope>
    <source>
        <tissue>Kidney</tissue>
        <tissue>Placenta</tissue>
    </source>
</reference>
<reference key="3">
    <citation type="journal article" date="2007" name="BMC Genomics">
        <title>The full-ORF clone resource of the German cDNA consortium.</title>
        <authorList>
            <person name="Bechtel S."/>
            <person name="Rosenfelder H."/>
            <person name="Duda A."/>
            <person name="Schmidt C.P."/>
            <person name="Ernst U."/>
            <person name="Wellenreuther R."/>
            <person name="Mehrle A."/>
            <person name="Schuster C."/>
            <person name="Bahr A."/>
            <person name="Bloecker H."/>
            <person name="Heubner D."/>
            <person name="Hoerlein A."/>
            <person name="Michel G."/>
            <person name="Wedler H."/>
            <person name="Koehrer K."/>
            <person name="Ottenwaelder B."/>
            <person name="Poustka A."/>
            <person name="Wiemann S."/>
            <person name="Schupp I."/>
        </authorList>
    </citation>
    <scope>NUCLEOTIDE SEQUENCE [LARGE SCALE MRNA] (ISOFORM 2)</scope>
    <source>
        <tissue>Uterus</tissue>
    </source>
</reference>
<reference key="4">
    <citation type="journal article" date="2003" name="Nature">
        <title>The DNA sequence and analysis of human chromosome 6.</title>
        <authorList>
            <person name="Mungall A.J."/>
            <person name="Palmer S.A."/>
            <person name="Sims S.K."/>
            <person name="Edwards C.A."/>
            <person name="Ashurst J.L."/>
            <person name="Wilming L."/>
            <person name="Jones M.C."/>
            <person name="Horton R."/>
            <person name="Hunt S.E."/>
            <person name="Scott C.E."/>
            <person name="Gilbert J.G.R."/>
            <person name="Clamp M.E."/>
            <person name="Bethel G."/>
            <person name="Milne S."/>
            <person name="Ainscough R."/>
            <person name="Almeida J.P."/>
            <person name="Ambrose K.D."/>
            <person name="Andrews T.D."/>
            <person name="Ashwell R.I.S."/>
            <person name="Babbage A.K."/>
            <person name="Bagguley C.L."/>
            <person name="Bailey J."/>
            <person name="Banerjee R."/>
            <person name="Barker D.J."/>
            <person name="Barlow K.F."/>
            <person name="Bates K."/>
            <person name="Beare D.M."/>
            <person name="Beasley H."/>
            <person name="Beasley O."/>
            <person name="Bird C.P."/>
            <person name="Blakey S.E."/>
            <person name="Bray-Allen S."/>
            <person name="Brook J."/>
            <person name="Brown A.J."/>
            <person name="Brown J.Y."/>
            <person name="Burford D.C."/>
            <person name="Burrill W."/>
            <person name="Burton J."/>
            <person name="Carder C."/>
            <person name="Carter N.P."/>
            <person name="Chapman J.C."/>
            <person name="Clark S.Y."/>
            <person name="Clark G."/>
            <person name="Clee C.M."/>
            <person name="Clegg S."/>
            <person name="Cobley V."/>
            <person name="Collier R.E."/>
            <person name="Collins J.E."/>
            <person name="Colman L.K."/>
            <person name="Corby N.R."/>
            <person name="Coville G.J."/>
            <person name="Culley K.M."/>
            <person name="Dhami P."/>
            <person name="Davies J."/>
            <person name="Dunn M."/>
            <person name="Earthrowl M.E."/>
            <person name="Ellington A.E."/>
            <person name="Evans K.A."/>
            <person name="Faulkner L."/>
            <person name="Francis M.D."/>
            <person name="Frankish A."/>
            <person name="Frankland J."/>
            <person name="French L."/>
            <person name="Garner P."/>
            <person name="Garnett J."/>
            <person name="Ghori M.J."/>
            <person name="Gilby L.M."/>
            <person name="Gillson C.J."/>
            <person name="Glithero R.J."/>
            <person name="Grafham D.V."/>
            <person name="Grant M."/>
            <person name="Gribble S."/>
            <person name="Griffiths C."/>
            <person name="Griffiths M.N.D."/>
            <person name="Hall R."/>
            <person name="Halls K.S."/>
            <person name="Hammond S."/>
            <person name="Harley J.L."/>
            <person name="Hart E.A."/>
            <person name="Heath P.D."/>
            <person name="Heathcott R."/>
            <person name="Holmes S.J."/>
            <person name="Howden P.J."/>
            <person name="Howe K.L."/>
            <person name="Howell G.R."/>
            <person name="Huckle E."/>
            <person name="Humphray S.J."/>
            <person name="Humphries M.D."/>
            <person name="Hunt A.R."/>
            <person name="Johnson C.M."/>
            <person name="Joy A.A."/>
            <person name="Kay M."/>
            <person name="Keenan S.J."/>
            <person name="Kimberley A.M."/>
            <person name="King A."/>
            <person name="Laird G.K."/>
            <person name="Langford C."/>
            <person name="Lawlor S."/>
            <person name="Leongamornlert D.A."/>
            <person name="Leversha M."/>
            <person name="Lloyd C.R."/>
            <person name="Lloyd D.M."/>
            <person name="Loveland J.E."/>
            <person name="Lovell J."/>
            <person name="Martin S."/>
            <person name="Mashreghi-Mohammadi M."/>
            <person name="Maslen G.L."/>
            <person name="Matthews L."/>
            <person name="McCann O.T."/>
            <person name="McLaren S.J."/>
            <person name="McLay K."/>
            <person name="McMurray A."/>
            <person name="Moore M.J.F."/>
            <person name="Mullikin J.C."/>
            <person name="Niblett D."/>
            <person name="Nickerson T."/>
            <person name="Novik K.L."/>
            <person name="Oliver K."/>
            <person name="Overton-Larty E.K."/>
            <person name="Parker A."/>
            <person name="Patel R."/>
            <person name="Pearce A.V."/>
            <person name="Peck A.I."/>
            <person name="Phillimore B.J.C.T."/>
            <person name="Phillips S."/>
            <person name="Plumb R.W."/>
            <person name="Porter K.M."/>
            <person name="Ramsey Y."/>
            <person name="Ranby S.A."/>
            <person name="Rice C.M."/>
            <person name="Ross M.T."/>
            <person name="Searle S.M."/>
            <person name="Sehra H.K."/>
            <person name="Sheridan E."/>
            <person name="Skuce C.D."/>
            <person name="Smith S."/>
            <person name="Smith M."/>
            <person name="Spraggon L."/>
            <person name="Squares S.L."/>
            <person name="Steward C.A."/>
            <person name="Sycamore N."/>
            <person name="Tamlyn-Hall G."/>
            <person name="Tester J."/>
            <person name="Theaker A.J."/>
            <person name="Thomas D.W."/>
            <person name="Thorpe A."/>
            <person name="Tracey A."/>
            <person name="Tromans A."/>
            <person name="Tubby B."/>
            <person name="Wall M."/>
            <person name="Wallis J.M."/>
            <person name="West A.P."/>
            <person name="White S.S."/>
            <person name="Whitehead S.L."/>
            <person name="Whittaker H."/>
            <person name="Wild A."/>
            <person name="Willey D.J."/>
            <person name="Wilmer T.E."/>
            <person name="Wood J.M."/>
            <person name="Wray P.W."/>
            <person name="Wyatt J.C."/>
            <person name="Young L."/>
            <person name="Younger R.M."/>
            <person name="Bentley D.R."/>
            <person name="Coulson A."/>
            <person name="Durbin R.M."/>
            <person name="Hubbard T."/>
            <person name="Sulston J.E."/>
            <person name="Dunham I."/>
            <person name="Rogers J."/>
            <person name="Beck S."/>
        </authorList>
    </citation>
    <scope>NUCLEOTIDE SEQUENCE [LARGE SCALE GENOMIC DNA]</scope>
</reference>
<reference key="5">
    <citation type="journal article" date="2004" name="Genome Res.">
        <title>The status, quality, and expansion of the NIH full-length cDNA project: the Mammalian Gene Collection (MGC).</title>
        <authorList>
            <consortium name="The MGC Project Team"/>
        </authorList>
    </citation>
    <scope>NUCLEOTIDE SEQUENCE [LARGE SCALE MRNA] (ISOFORM 1)</scope>
    <scope>VARIANT SER-165</scope>
    <source>
        <tissue>Brain</tissue>
    </source>
</reference>
<reference key="6">
    <citation type="journal article" date="2006" name="Cell">
        <title>Global, in vivo, and site-specific phosphorylation dynamics in signaling networks.</title>
        <authorList>
            <person name="Olsen J.V."/>
            <person name="Blagoev B."/>
            <person name="Gnad F."/>
            <person name="Macek B."/>
            <person name="Kumar C."/>
            <person name="Mortensen P."/>
            <person name="Mann M."/>
        </authorList>
    </citation>
    <scope>PHOSPHORYLATION [LARGE SCALE ANALYSIS] AT SER-522</scope>
    <scope>IDENTIFICATION BY MASS SPECTROMETRY [LARGE SCALE ANALYSIS]</scope>
    <source>
        <tissue>Cervix carcinoma</tissue>
    </source>
</reference>
<reference key="7">
    <citation type="journal article" date="2009" name="Anal. Chem.">
        <title>Lys-N and trypsin cover complementary parts of the phosphoproteome in a refined SCX-based approach.</title>
        <authorList>
            <person name="Gauci S."/>
            <person name="Helbig A.O."/>
            <person name="Slijper M."/>
            <person name="Krijgsveld J."/>
            <person name="Heck A.J."/>
            <person name="Mohammed S."/>
        </authorList>
    </citation>
    <scope>IDENTIFICATION BY MASS SPECTROMETRY [LARGE SCALE ANALYSIS]</scope>
</reference>
<reference key="8">
    <citation type="journal article" date="2013" name="J. Proteome Res.">
        <title>Toward a comprehensive characterization of a human cancer cell phosphoproteome.</title>
        <authorList>
            <person name="Zhou H."/>
            <person name="Di Palma S."/>
            <person name="Preisinger C."/>
            <person name="Peng M."/>
            <person name="Polat A.N."/>
            <person name="Heck A.J."/>
            <person name="Mohammed S."/>
        </authorList>
    </citation>
    <scope>PHOSPHORYLATION [LARGE SCALE ANALYSIS] AT SER-16; THR-25; SER-522 AND SER-560</scope>
    <scope>IDENTIFICATION BY MASS SPECTROMETRY [LARGE SCALE ANALYSIS]</scope>
    <source>
        <tissue>Cervix carcinoma</tissue>
        <tissue>Erythroleukemia</tissue>
    </source>
</reference>
<reference key="9">
    <citation type="journal article" date="2014" name="J. Proteomics">
        <title>An enzyme assisted RP-RPLC approach for in-depth analysis of human liver phosphoproteome.</title>
        <authorList>
            <person name="Bian Y."/>
            <person name="Song C."/>
            <person name="Cheng K."/>
            <person name="Dong M."/>
            <person name="Wang F."/>
            <person name="Huang J."/>
            <person name="Sun D."/>
            <person name="Wang L."/>
            <person name="Ye M."/>
            <person name="Zou H."/>
        </authorList>
    </citation>
    <scope>PHOSPHORYLATION [LARGE SCALE ANALYSIS] AT THR-25</scope>
    <scope>IDENTIFICATION BY MASS SPECTROMETRY [LARGE SCALE ANALYSIS]</scope>
    <source>
        <tissue>Liver</tissue>
    </source>
</reference>
<reference key="10">
    <citation type="journal article" date="2015" name="Angew. Chem. Int. Ed.">
        <title>Multifunctional reagents for quantitative proteome-wide analysis of protein modification in human cells and dynamic profiling of protein lipidation during vertebrate development.</title>
        <authorList>
            <person name="Broncel M."/>
            <person name="Serwa R.A."/>
            <person name="Ciepla P."/>
            <person name="Krause E."/>
            <person name="Dallman M.J."/>
            <person name="Magee A.I."/>
            <person name="Tate E.W."/>
        </authorList>
    </citation>
    <scope>MYRISTOYLATION AT GLY-2 (ISOFORMS 2 AND 4)</scope>
    <scope>CLEAVAGE OF INITIATOR METHIONINE (ISOFORMS 2 AND 4)</scope>
    <scope>IDENTIFICATION BY MASS SPECTROMETRY</scope>
</reference>
<comment type="subunit">
    <text evidence="1">Binds PPP1CA and actin.</text>
</comment>
<comment type="interaction">
    <interactant intactId="EBI-1754409">
        <id>O75167</id>
    </interactant>
    <interactant intactId="EBI-389883">
        <id>P16333</id>
        <label>NCK1</label>
    </interactant>
    <organismsDiffer>false</organismsDiffer>
    <experiments>2</experiments>
</comment>
<comment type="subcellular location">
    <molecule>Isoform 2</molecule>
    <subcellularLocation>
        <location evidence="9">Membrane</location>
        <topology evidence="9">Lipid-anchor</topology>
    </subcellularLocation>
</comment>
<comment type="subcellular location">
    <molecule>Isoform 4</molecule>
    <subcellularLocation>
        <location evidence="9">Membrane</location>
        <topology evidence="9">Lipid-anchor</topology>
    </subcellularLocation>
</comment>
<comment type="alternative products">
    <event type="alternative splicing"/>
    <isoform>
        <id>O75167-1</id>
        <name>1</name>
        <sequence type="displayed"/>
    </isoform>
    <isoform>
        <id>O75167-2</id>
        <name>2</name>
        <sequence type="described" ref="VSP_012272 VSP_012273"/>
    </isoform>
    <isoform>
        <id>O75167-4</id>
        <name>4</name>
        <sequence type="described" ref="VSP_012272"/>
    </isoform>
    <isoform>
        <id>O75167-5</id>
        <name>5</name>
        <sequence type="described" ref="VSP_012273"/>
    </isoform>
</comment>
<comment type="similarity">
    <text evidence="9">Belongs to the phosphatase and actin regulator family.</text>
</comment>
<comment type="sequence caution" evidence="9">
    <conflict type="erroneous initiation">
        <sequence resource="EMBL-CDS" id="BAA31655"/>
    </conflict>
</comment>
<comment type="sequence caution" evidence="9">
    <conflict type="erroneous termination">
        <sequence resource="EMBL-CDS" id="BAG60527"/>
    </conflict>
    <text>Truncated C-terminus.</text>
</comment>